<gene>
    <name evidence="1" type="primary">gatA</name>
    <name type="ordered locus">HRM2_31520</name>
</gene>
<sequence>MELHELTLEGARALLLSGEISSKDLTTCLLDRIKTHDADLGAFITVDAAGALEAATAADERIARGEDAPLLGIPLALKDLLCTSGVRTTCASKILENFVPTYDATAVTLLKQAGAVIVGKTNLDEFGMGSSTENSAFHLTRNPWNLDHVPGGSSGGSAAAVAARMCTAALGTDTGGSIRQPASHCGVVGLKPSYGRVSRFGMVAYASSLDQIGPITRTVKDAALMMNVISGHDPKDSTSAAIDKPDFTQAFAGFDAKGLAGMKAGIPREYIGMKGLDPEVERSFKNACKVLEDLGVEVIDVSLPHTNFAVAAYYVLAPSEASANLSRYDGVKYGFRQTGCDDLMDMYKQTRSSGFGPEVKRRIIMGTYALSAGYYDEYYGRASRVRTLIMADFSKAFDQCDIILSPVAPTPAFKIGENVDDPLTMYLGDIFTLSANMAGIPGLSVPCAMSTTGLPIGLQILGRRFDEMSVLKAGYGLEQRCPGLPGLPNL</sequence>
<comment type="function">
    <text evidence="1">Allows the formation of correctly charged Gln-tRNA(Gln) through the transamidation of misacylated Glu-tRNA(Gln) in organisms which lack glutaminyl-tRNA synthetase. The reaction takes place in the presence of glutamine and ATP through an activated gamma-phospho-Glu-tRNA(Gln).</text>
</comment>
<comment type="catalytic activity">
    <reaction evidence="1">
        <text>L-glutamyl-tRNA(Gln) + L-glutamine + ATP + H2O = L-glutaminyl-tRNA(Gln) + L-glutamate + ADP + phosphate + H(+)</text>
        <dbReference type="Rhea" id="RHEA:17521"/>
        <dbReference type="Rhea" id="RHEA-COMP:9681"/>
        <dbReference type="Rhea" id="RHEA-COMP:9684"/>
        <dbReference type="ChEBI" id="CHEBI:15377"/>
        <dbReference type="ChEBI" id="CHEBI:15378"/>
        <dbReference type="ChEBI" id="CHEBI:29985"/>
        <dbReference type="ChEBI" id="CHEBI:30616"/>
        <dbReference type="ChEBI" id="CHEBI:43474"/>
        <dbReference type="ChEBI" id="CHEBI:58359"/>
        <dbReference type="ChEBI" id="CHEBI:78520"/>
        <dbReference type="ChEBI" id="CHEBI:78521"/>
        <dbReference type="ChEBI" id="CHEBI:456216"/>
        <dbReference type="EC" id="6.3.5.7"/>
    </reaction>
</comment>
<comment type="subunit">
    <text evidence="1">Heterotrimer of A, B and C subunits.</text>
</comment>
<comment type="similarity">
    <text evidence="1">Belongs to the amidase family. GatA subfamily.</text>
</comment>
<keyword id="KW-0067">ATP-binding</keyword>
<keyword id="KW-0436">Ligase</keyword>
<keyword id="KW-0547">Nucleotide-binding</keyword>
<keyword id="KW-0648">Protein biosynthesis</keyword>
<keyword id="KW-1185">Reference proteome</keyword>
<dbReference type="EC" id="6.3.5.7" evidence="1"/>
<dbReference type="EMBL" id="CP001087">
    <property type="protein sequence ID" value="ACN16235.1"/>
    <property type="molecule type" value="Genomic_DNA"/>
</dbReference>
<dbReference type="RefSeq" id="WP_015904997.1">
    <property type="nucleotide sequence ID" value="NC_012108.1"/>
</dbReference>
<dbReference type="SMR" id="C0QKZ5"/>
<dbReference type="STRING" id="177437.HRM2_31520"/>
<dbReference type="KEGG" id="dat:HRM2_31520"/>
<dbReference type="eggNOG" id="COG0154">
    <property type="taxonomic scope" value="Bacteria"/>
</dbReference>
<dbReference type="HOGENOM" id="CLU_009600_0_3_7"/>
<dbReference type="OrthoDB" id="9811471at2"/>
<dbReference type="Proteomes" id="UP000000442">
    <property type="component" value="Chromosome"/>
</dbReference>
<dbReference type="GO" id="GO:0030956">
    <property type="term" value="C:glutamyl-tRNA(Gln) amidotransferase complex"/>
    <property type="evidence" value="ECO:0007669"/>
    <property type="project" value="InterPro"/>
</dbReference>
<dbReference type="GO" id="GO:0005524">
    <property type="term" value="F:ATP binding"/>
    <property type="evidence" value="ECO:0007669"/>
    <property type="project" value="UniProtKB-KW"/>
</dbReference>
<dbReference type="GO" id="GO:0050567">
    <property type="term" value="F:glutaminyl-tRNA synthase (glutamine-hydrolyzing) activity"/>
    <property type="evidence" value="ECO:0007669"/>
    <property type="project" value="UniProtKB-UniRule"/>
</dbReference>
<dbReference type="GO" id="GO:0006412">
    <property type="term" value="P:translation"/>
    <property type="evidence" value="ECO:0007669"/>
    <property type="project" value="UniProtKB-UniRule"/>
</dbReference>
<dbReference type="Gene3D" id="3.90.1300.10">
    <property type="entry name" value="Amidase signature (AS) domain"/>
    <property type="match status" value="1"/>
</dbReference>
<dbReference type="HAMAP" id="MF_00120">
    <property type="entry name" value="GatA"/>
    <property type="match status" value="1"/>
</dbReference>
<dbReference type="InterPro" id="IPR000120">
    <property type="entry name" value="Amidase"/>
</dbReference>
<dbReference type="InterPro" id="IPR020556">
    <property type="entry name" value="Amidase_CS"/>
</dbReference>
<dbReference type="InterPro" id="IPR023631">
    <property type="entry name" value="Amidase_dom"/>
</dbReference>
<dbReference type="InterPro" id="IPR036928">
    <property type="entry name" value="AS_sf"/>
</dbReference>
<dbReference type="InterPro" id="IPR004412">
    <property type="entry name" value="GatA"/>
</dbReference>
<dbReference type="NCBIfam" id="TIGR00132">
    <property type="entry name" value="gatA"/>
    <property type="match status" value="1"/>
</dbReference>
<dbReference type="PANTHER" id="PTHR11895:SF151">
    <property type="entry name" value="GLUTAMYL-TRNA(GLN) AMIDOTRANSFERASE SUBUNIT A"/>
    <property type="match status" value="1"/>
</dbReference>
<dbReference type="PANTHER" id="PTHR11895">
    <property type="entry name" value="TRANSAMIDASE"/>
    <property type="match status" value="1"/>
</dbReference>
<dbReference type="Pfam" id="PF01425">
    <property type="entry name" value="Amidase"/>
    <property type="match status" value="1"/>
</dbReference>
<dbReference type="PIRSF" id="PIRSF001221">
    <property type="entry name" value="Amidase_fungi"/>
    <property type="match status" value="1"/>
</dbReference>
<dbReference type="SUPFAM" id="SSF75304">
    <property type="entry name" value="Amidase signature (AS) enzymes"/>
    <property type="match status" value="1"/>
</dbReference>
<dbReference type="PROSITE" id="PS00571">
    <property type="entry name" value="AMIDASES"/>
    <property type="match status" value="1"/>
</dbReference>
<organism>
    <name type="scientific">Desulforapulum autotrophicum (strain ATCC 43914 / DSM 3382 / VKM B-1955 / HRM2)</name>
    <name type="common">Desulfobacterium autotrophicum</name>
    <dbReference type="NCBI Taxonomy" id="177437"/>
    <lineage>
        <taxon>Bacteria</taxon>
        <taxon>Pseudomonadati</taxon>
        <taxon>Thermodesulfobacteriota</taxon>
        <taxon>Desulfobacteria</taxon>
        <taxon>Desulfobacterales</taxon>
        <taxon>Desulfobacteraceae</taxon>
        <taxon>Desulforapulum</taxon>
    </lineage>
</organism>
<protein>
    <recommendedName>
        <fullName evidence="1">Glutamyl-tRNA(Gln) amidotransferase subunit A</fullName>
        <shortName evidence="1">Glu-ADT subunit A</shortName>
        <ecNumber evidence="1">6.3.5.7</ecNumber>
    </recommendedName>
</protein>
<evidence type="ECO:0000255" key="1">
    <source>
        <dbReference type="HAMAP-Rule" id="MF_00120"/>
    </source>
</evidence>
<reference key="1">
    <citation type="journal article" date="2009" name="Environ. Microbiol.">
        <title>Genome sequence of Desulfobacterium autotrophicum HRM2, a marine sulfate reducer oxidizing organic carbon completely to carbon dioxide.</title>
        <authorList>
            <person name="Strittmatter A.W."/>
            <person name="Liesegang H."/>
            <person name="Rabus R."/>
            <person name="Decker I."/>
            <person name="Amann J."/>
            <person name="Andres S."/>
            <person name="Henne A."/>
            <person name="Fricke W.F."/>
            <person name="Martinez-Arias R."/>
            <person name="Bartels D."/>
            <person name="Goesmann A."/>
            <person name="Krause L."/>
            <person name="Puehler A."/>
            <person name="Klenk H.P."/>
            <person name="Richter M."/>
            <person name="Schuler M."/>
            <person name="Gloeckner F.O."/>
            <person name="Meyerdierks A."/>
            <person name="Gottschalk G."/>
            <person name="Amann R."/>
        </authorList>
    </citation>
    <scope>NUCLEOTIDE SEQUENCE [LARGE SCALE GENOMIC DNA]</scope>
    <source>
        <strain>ATCC 43914 / DSM 3382 / VKM B-1955 / HRM2</strain>
    </source>
</reference>
<name>GATA_DESAH</name>
<feature type="chain" id="PRO_1000203032" description="Glutamyl-tRNA(Gln) amidotransferase subunit A">
    <location>
        <begin position="1"/>
        <end position="490"/>
    </location>
</feature>
<feature type="active site" description="Charge relay system" evidence="1">
    <location>
        <position position="78"/>
    </location>
</feature>
<feature type="active site" description="Charge relay system" evidence="1">
    <location>
        <position position="153"/>
    </location>
</feature>
<feature type="active site" description="Acyl-ester intermediate" evidence="1">
    <location>
        <position position="177"/>
    </location>
</feature>
<accession>C0QKZ5</accession>
<proteinExistence type="inferred from homology"/>